<organism>
    <name type="scientific">Enterobacteria phage T3</name>
    <name type="common">Bacteriophage T3</name>
    <dbReference type="NCBI Taxonomy" id="10759"/>
    <lineage>
        <taxon>Viruses</taxon>
        <taxon>Duplodnaviria</taxon>
        <taxon>Heunggongvirae</taxon>
        <taxon>Uroviricota</taxon>
        <taxon>Caudoviricetes</taxon>
        <taxon>Autographiviridae</taxon>
        <taxon>Studiervirinae</taxon>
        <taxon>Teetrevirus</taxon>
        <taxon>Teetrevirus T3</taxon>
    </lineage>
</organism>
<comment type="function">
    <text evidence="1">Scaffolding protein involved in the icosahedric procapsid assembly. Coassembles with the capsid proteins to form the procapsid, in which the scaffolding protein is found within the external shell of icosahedrally arranged capsid protein subunits. In a subsequent step the scaffolding protein molecules are released from the procapsid. Facilitates assembly by binding to gp10 hexamers but not the pentamers and locking them into a morphogenically correct conformation.</text>
</comment>
<comment type="similarity">
    <text evidence="3">Belongs to the T7likevirus capsid assembly scaffolding protein family.</text>
</comment>
<proteinExistence type="inferred from homology"/>
<evidence type="ECO:0000250" key="1">
    <source>
        <dbReference type="UniProtKB" id="P03716"/>
    </source>
</evidence>
<evidence type="ECO:0000256" key="2">
    <source>
        <dbReference type="SAM" id="MobiDB-lite"/>
    </source>
</evidence>
<evidence type="ECO:0000305" key="3"/>
<organismHost>
    <name type="scientific">Escherichia coli</name>
    <dbReference type="NCBI Taxonomy" id="562"/>
</organismHost>
<accession>P20324</accession>
<sequence length="310" mass="33729">MAESNADVYASFGVNNAVMTGSTPTEHEQNMLSLDVAARDGDDAIVLSDEPTSHNDDPYAAGVDPFADGEDDEGRIQVRISEDGNEAGFDTDGDNSEVETEGEDVEFEPLGDTPEELSQVTEQLGQHEEGFQAMVEQAVERGLSADSVSRIYEEYEADGISEKSYAELEAAGYSRAFVDSYISGQEALVDQYVNQVVAFAGGQERFSAIHTHLEATNPAAAESLESAMMNRDLATVKAIINLAGESYTKKFGKPANRSVTKRATPVKPVARQKEGFTNQAEMIKAMSDPRYRSDSAYRQMVEQKVIDSSF</sequence>
<gene>
    <name type="primary">9</name>
</gene>
<protein>
    <recommendedName>
        <fullName>Capsid assembly scaffolding protein</fullName>
    </recommendedName>
    <alternativeName>
        <fullName>Capsid assembly protein</fullName>
    </alternativeName>
    <alternativeName>
        <fullName>Gene product 9</fullName>
        <shortName>Gp9</shortName>
    </alternativeName>
    <alternativeName>
        <fullName>Head morphogenesis protein</fullName>
    </alternativeName>
    <alternativeName>
        <fullName>Scaffold protein</fullName>
    </alternativeName>
    <alternativeName>
        <fullName>Scaffolding protein</fullName>
    </alternativeName>
</protein>
<feature type="chain" id="PRO_0000106518" description="Capsid assembly scaffolding protein">
    <location>
        <begin position="1"/>
        <end position="310"/>
    </location>
</feature>
<feature type="region of interest" description="Disordered" evidence="2">
    <location>
        <begin position="46"/>
        <end position="102"/>
    </location>
</feature>
<feature type="compositionally biased region" description="Acidic residues" evidence="2">
    <location>
        <begin position="83"/>
        <end position="102"/>
    </location>
</feature>
<reference key="1">
    <citation type="journal article" date="1989" name="J. Mol. Biol.">
        <title>Sequence of bacteriophage T3 DNA from gene 2.5 through gene 9.</title>
        <authorList>
            <person name="Beck P.J."/>
            <person name="Gonzalez S."/>
            <person name="Ward C.L."/>
            <person name="Molineux I.J."/>
        </authorList>
    </citation>
    <scope>NUCLEOTIDE SEQUENCE [GENOMIC DNA]</scope>
    <source>
        <strain>Luria</strain>
    </source>
</reference>
<name>SCAF_BPT3</name>
<keyword id="KW-0118">Viral capsid assembly</keyword>
<keyword id="KW-1188">Viral release from host cell</keyword>
<dbReference type="EMBL" id="X17255">
    <property type="protein sequence ID" value="CAA35153.1"/>
    <property type="molecule type" value="Genomic_DNA"/>
</dbReference>
<dbReference type="PIR" id="S07522">
    <property type="entry name" value="S07522"/>
</dbReference>
<dbReference type="RefSeq" id="NP_523333.1">
    <property type="nucleotide sequence ID" value="NC_003298.1"/>
</dbReference>
<dbReference type="KEGG" id="vg:927415"/>
<dbReference type="OrthoDB" id="9213at10239"/>
<dbReference type="GO" id="GO:0019069">
    <property type="term" value="P:viral capsid assembly"/>
    <property type="evidence" value="ECO:0007669"/>
    <property type="project" value="InterPro"/>
</dbReference>
<dbReference type="InterPro" id="IPR008768">
    <property type="entry name" value="Gp9-like"/>
</dbReference>
<dbReference type="Pfam" id="PF05396">
    <property type="entry name" value="Phage_T7_Capsid"/>
    <property type="match status" value="1"/>
</dbReference>